<dbReference type="EC" id="3.2.2.23" evidence="2"/>
<dbReference type="EC" id="4.2.99.18" evidence="2"/>
<dbReference type="EMBL" id="CP000553">
    <property type="protein sequence ID" value="ABM74984.1"/>
    <property type="molecule type" value="Genomic_DNA"/>
</dbReference>
<dbReference type="RefSeq" id="WP_011823175.1">
    <property type="nucleotide sequence ID" value="NC_008819.1"/>
</dbReference>
<dbReference type="SMR" id="A2C0H4"/>
<dbReference type="KEGG" id="pme:NATL1_04201"/>
<dbReference type="eggNOG" id="COG0266">
    <property type="taxonomic scope" value="Bacteria"/>
</dbReference>
<dbReference type="HOGENOM" id="CLU_038423_1_2_3"/>
<dbReference type="Proteomes" id="UP000002592">
    <property type="component" value="Chromosome"/>
</dbReference>
<dbReference type="GO" id="GO:0034039">
    <property type="term" value="F:8-oxo-7,8-dihydroguanine DNA N-glycosylase activity"/>
    <property type="evidence" value="ECO:0007669"/>
    <property type="project" value="TreeGrafter"/>
</dbReference>
<dbReference type="GO" id="GO:0140078">
    <property type="term" value="F:class I DNA-(apurinic or apyrimidinic site) endonuclease activity"/>
    <property type="evidence" value="ECO:0007669"/>
    <property type="project" value="UniProtKB-EC"/>
</dbReference>
<dbReference type="GO" id="GO:0003684">
    <property type="term" value="F:damaged DNA binding"/>
    <property type="evidence" value="ECO:0007669"/>
    <property type="project" value="InterPro"/>
</dbReference>
<dbReference type="GO" id="GO:0008270">
    <property type="term" value="F:zinc ion binding"/>
    <property type="evidence" value="ECO:0007669"/>
    <property type="project" value="UniProtKB-UniRule"/>
</dbReference>
<dbReference type="GO" id="GO:0006284">
    <property type="term" value="P:base-excision repair"/>
    <property type="evidence" value="ECO:0007669"/>
    <property type="project" value="InterPro"/>
</dbReference>
<dbReference type="CDD" id="cd08966">
    <property type="entry name" value="EcFpg-like_N"/>
    <property type="match status" value="1"/>
</dbReference>
<dbReference type="FunFam" id="1.10.8.50:FF:000003">
    <property type="entry name" value="Formamidopyrimidine-DNA glycosylase"/>
    <property type="match status" value="1"/>
</dbReference>
<dbReference type="Gene3D" id="1.10.8.50">
    <property type="match status" value="1"/>
</dbReference>
<dbReference type="Gene3D" id="3.20.190.10">
    <property type="entry name" value="MutM-like, N-terminal"/>
    <property type="match status" value="1"/>
</dbReference>
<dbReference type="HAMAP" id="MF_00103">
    <property type="entry name" value="Fapy_DNA_glycosyl"/>
    <property type="match status" value="1"/>
</dbReference>
<dbReference type="InterPro" id="IPR015886">
    <property type="entry name" value="DNA_glyclase/AP_lyase_DNA-bd"/>
</dbReference>
<dbReference type="InterPro" id="IPR015887">
    <property type="entry name" value="DNA_glyclase_Znf_dom_DNA_BS"/>
</dbReference>
<dbReference type="InterPro" id="IPR020629">
    <property type="entry name" value="Formamido-pyr_DNA_Glyclase"/>
</dbReference>
<dbReference type="InterPro" id="IPR012319">
    <property type="entry name" value="FPG_cat"/>
</dbReference>
<dbReference type="InterPro" id="IPR035937">
    <property type="entry name" value="MutM-like_N-ter"/>
</dbReference>
<dbReference type="InterPro" id="IPR010979">
    <property type="entry name" value="Ribosomal_uS13-like_H2TH"/>
</dbReference>
<dbReference type="InterPro" id="IPR000214">
    <property type="entry name" value="Znf_DNA_glyclase/AP_lyase"/>
</dbReference>
<dbReference type="InterPro" id="IPR010663">
    <property type="entry name" value="Znf_FPG/IleRS"/>
</dbReference>
<dbReference type="NCBIfam" id="TIGR00577">
    <property type="entry name" value="fpg"/>
    <property type="match status" value="1"/>
</dbReference>
<dbReference type="NCBIfam" id="NF002211">
    <property type="entry name" value="PRK01103.1"/>
    <property type="match status" value="1"/>
</dbReference>
<dbReference type="NCBIfam" id="NF010551">
    <property type="entry name" value="PRK13945.1"/>
    <property type="match status" value="1"/>
</dbReference>
<dbReference type="PANTHER" id="PTHR22993">
    <property type="entry name" value="FORMAMIDOPYRIMIDINE-DNA GLYCOSYLASE"/>
    <property type="match status" value="1"/>
</dbReference>
<dbReference type="PANTHER" id="PTHR22993:SF9">
    <property type="entry name" value="FORMAMIDOPYRIMIDINE-DNA GLYCOSYLASE"/>
    <property type="match status" value="1"/>
</dbReference>
<dbReference type="Pfam" id="PF01149">
    <property type="entry name" value="Fapy_DNA_glyco"/>
    <property type="match status" value="1"/>
</dbReference>
<dbReference type="Pfam" id="PF06831">
    <property type="entry name" value="H2TH"/>
    <property type="match status" value="1"/>
</dbReference>
<dbReference type="Pfam" id="PF06827">
    <property type="entry name" value="zf-FPG_IleRS"/>
    <property type="match status" value="1"/>
</dbReference>
<dbReference type="SMART" id="SM00898">
    <property type="entry name" value="Fapy_DNA_glyco"/>
    <property type="match status" value="1"/>
</dbReference>
<dbReference type="SMART" id="SM01232">
    <property type="entry name" value="H2TH"/>
    <property type="match status" value="1"/>
</dbReference>
<dbReference type="SUPFAM" id="SSF57716">
    <property type="entry name" value="Glucocorticoid receptor-like (DNA-binding domain)"/>
    <property type="match status" value="1"/>
</dbReference>
<dbReference type="SUPFAM" id="SSF81624">
    <property type="entry name" value="N-terminal domain of MutM-like DNA repair proteins"/>
    <property type="match status" value="1"/>
</dbReference>
<dbReference type="SUPFAM" id="SSF46946">
    <property type="entry name" value="S13-like H2TH domain"/>
    <property type="match status" value="1"/>
</dbReference>
<dbReference type="PROSITE" id="PS51068">
    <property type="entry name" value="FPG_CAT"/>
    <property type="match status" value="1"/>
</dbReference>
<dbReference type="PROSITE" id="PS01242">
    <property type="entry name" value="ZF_FPG_1"/>
    <property type="match status" value="1"/>
</dbReference>
<dbReference type="PROSITE" id="PS51066">
    <property type="entry name" value="ZF_FPG_2"/>
    <property type="match status" value="1"/>
</dbReference>
<comment type="function">
    <text evidence="2">Involved in base excision repair of DNA damaged by oxidation or by mutagenic agents. Acts as a DNA glycosylase that recognizes and removes damaged bases. Has a preference for oxidized purines, such as 7,8-dihydro-8-oxoguanine (8-oxoG). Has AP (apurinic/apyrimidinic) lyase activity and introduces nicks in the DNA strand. Cleaves the DNA backbone by beta-delta elimination to generate a single-strand break at the site of the removed base with both 3'- and 5'-phosphates.</text>
</comment>
<comment type="catalytic activity">
    <reaction evidence="2">
        <text>Hydrolysis of DNA containing ring-opened 7-methylguanine residues, releasing 2,6-diamino-4-hydroxy-5-(N-methyl)formamidopyrimidine.</text>
        <dbReference type="EC" id="3.2.2.23"/>
    </reaction>
</comment>
<comment type="catalytic activity">
    <reaction evidence="2">
        <text>2'-deoxyribonucleotide-(2'-deoxyribose 5'-phosphate)-2'-deoxyribonucleotide-DNA = a 3'-end 2'-deoxyribonucleotide-(2,3-dehydro-2,3-deoxyribose 5'-phosphate)-DNA + a 5'-end 5'-phospho-2'-deoxyribonucleoside-DNA + H(+)</text>
        <dbReference type="Rhea" id="RHEA:66592"/>
        <dbReference type="Rhea" id="RHEA-COMP:13180"/>
        <dbReference type="Rhea" id="RHEA-COMP:16897"/>
        <dbReference type="Rhea" id="RHEA-COMP:17067"/>
        <dbReference type="ChEBI" id="CHEBI:15378"/>
        <dbReference type="ChEBI" id="CHEBI:136412"/>
        <dbReference type="ChEBI" id="CHEBI:157695"/>
        <dbReference type="ChEBI" id="CHEBI:167181"/>
        <dbReference type="EC" id="4.2.99.18"/>
    </reaction>
</comment>
<comment type="cofactor">
    <cofactor evidence="2">
        <name>Zn(2+)</name>
        <dbReference type="ChEBI" id="CHEBI:29105"/>
    </cofactor>
    <text evidence="2">Binds 1 zinc ion per subunit.</text>
</comment>
<comment type="subunit">
    <text evidence="2">Monomer.</text>
</comment>
<comment type="similarity">
    <text evidence="2">Belongs to the FPG family.</text>
</comment>
<evidence type="ECO:0000250" key="1"/>
<evidence type="ECO:0000255" key="2">
    <source>
        <dbReference type="HAMAP-Rule" id="MF_00103"/>
    </source>
</evidence>
<sequence length="282" mass="32248">MPELPEVETVRKGLEKLLNDFYIERIEVLKERSIASNGGSKSFIDNVKNSYLGNWERRGKYLIGSLLTKEKFSKGFLVVHLRMTGQFKLLEKEVLACKHTRVRFFEERGRELRFIDIRNFGQMWHVPSSRSVPEIVSGIKRLGPEPFSDDFNSHYLEEYLKKKTRSIKSALLDQRTVAGVGNIYADETLFDAGINPKTESRNLKSNELKRLCNSLIKILNISIGEGGTTFSDFRDLEGGNGNYGGQALVYRRSGKNCKKCGEKILREKICGRSTHWCPNCQK</sequence>
<reference key="1">
    <citation type="journal article" date="2007" name="PLoS Genet.">
        <title>Patterns and implications of gene gain and loss in the evolution of Prochlorococcus.</title>
        <authorList>
            <person name="Kettler G.C."/>
            <person name="Martiny A.C."/>
            <person name="Huang K."/>
            <person name="Zucker J."/>
            <person name="Coleman M.L."/>
            <person name="Rodrigue S."/>
            <person name="Chen F."/>
            <person name="Lapidus A."/>
            <person name="Ferriera S."/>
            <person name="Johnson J."/>
            <person name="Steglich C."/>
            <person name="Church G.M."/>
            <person name="Richardson P."/>
            <person name="Chisholm S.W."/>
        </authorList>
    </citation>
    <scope>NUCLEOTIDE SEQUENCE [LARGE SCALE GENOMIC DNA]</scope>
    <source>
        <strain>NATL1A</strain>
    </source>
</reference>
<accession>A2C0H4</accession>
<keyword id="KW-0227">DNA damage</keyword>
<keyword id="KW-0234">DNA repair</keyword>
<keyword id="KW-0238">DNA-binding</keyword>
<keyword id="KW-0326">Glycosidase</keyword>
<keyword id="KW-0378">Hydrolase</keyword>
<keyword id="KW-0456">Lyase</keyword>
<keyword id="KW-0479">Metal-binding</keyword>
<keyword id="KW-0511">Multifunctional enzyme</keyword>
<keyword id="KW-0862">Zinc</keyword>
<keyword id="KW-0863">Zinc-finger</keyword>
<gene>
    <name evidence="2" type="primary">mutM</name>
    <name evidence="2" type="synonym">fpg</name>
    <name type="ordered locus">NATL1_04201</name>
</gene>
<proteinExistence type="inferred from homology"/>
<feature type="initiator methionine" description="Removed" evidence="1">
    <location>
        <position position="1"/>
    </location>
</feature>
<feature type="chain" id="PRO_1000008736" description="Formamidopyrimidine-DNA glycosylase">
    <location>
        <begin position="2"/>
        <end position="282"/>
    </location>
</feature>
<feature type="zinc finger region" description="FPG-type" evidence="2">
    <location>
        <begin position="248"/>
        <end position="282"/>
    </location>
</feature>
<feature type="active site" description="Schiff-base intermediate with DNA" evidence="2">
    <location>
        <position position="2"/>
    </location>
</feature>
<feature type="active site" description="Proton donor" evidence="2">
    <location>
        <position position="3"/>
    </location>
</feature>
<feature type="active site" description="Proton donor; for beta-elimination activity" evidence="2">
    <location>
        <position position="60"/>
    </location>
</feature>
<feature type="active site" description="Proton donor; for delta-elimination activity" evidence="2">
    <location>
        <position position="272"/>
    </location>
</feature>
<feature type="binding site" evidence="2">
    <location>
        <position position="99"/>
    </location>
    <ligand>
        <name>DNA</name>
        <dbReference type="ChEBI" id="CHEBI:16991"/>
    </ligand>
</feature>
<feature type="binding site" evidence="2">
    <location>
        <position position="118"/>
    </location>
    <ligand>
        <name>DNA</name>
        <dbReference type="ChEBI" id="CHEBI:16991"/>
    </ligand>
</feature>
<feature type="binding site" evidence="2">
    <location>
        <position position="163"/>
    </location>
    <ligand>
        <name>DNA</name>
        <dbReference type="ChEBI" id="CHEBI:16991"/>
    </ligand>
</feature>
<organism>
    <name type="scientific">Prochlorococcus marinus (strain NATL1A)</name>
    <dbReference type="NCBI Taxonomy" id="167555"/>
    <lineage>
        <taxon>Bacteria</taxon>
        <taxon>Bacillati</taxon>
        <taxon>Cyanobacteriota</taxon>
        <taxon>Cyanophyceae</taxon>
        <taxon>Synechococcales</taxon>
        <taxon>Prochlorococcaceae</taxon>
        <taxon>Prochlorococcus</taxon>
    </lineage>
</organism>
<protein>
    <recommendedName>
        <fullName evidence="2">Formamidopyrimidine-DNA glycosylase</fullName>
        <shortName evidence="2">Fapy-DNA glycosylase</shortName>
        <ecNumber evidence="2">3.2.2.23</ecNumber>
    </recommendedName>
    <alternativeName>
        <fullName evidence="2">DNA-(apurinic or apyrimidinic site) lyase MutM</fullName>
        <shortName evidence="2">AP lyase MutM</shortName>
        <ecNumber evidence="2">4.2.99.18</ecNumber>
    </alternativeName>
</protein>
<name>FPG_PROM1</name>